<name>YBHG_ECO7I</name>
<gene>
    <name evidence="1" type="primary">ybhG</name>
    <name type="ordered locus">ECIAI39_0771</name>
</gene>
<sequence length="332" mass="36417">MMKKPVVIGLAVVVLAAVVAGGYWWYQSRQDNGLTLYGNVDIRTVNLSFRVGGRVESLAVDEGDAIKAGQVLGELDHKPYEIALMQAKAGVSVAQAQYDLMLAGYRDEEIAQAAAAVKQAQAAYDYAQNFYNRQQGLWKSRTISANDLENARSSRDQAQATLKSAQDKLRQYRSGNREQDIAQAKASLEQAQAQLAQAELNLQDSTLIAPSDGTLLTRAVEPGTVLNEGGTVFTVSLTRPVWVRAYVDERNLDQAQPGRKVLLYTDGRPDKPYHGQIGFVSPTAEFTPKTVETPDLRTDLVYRLRIVVTDADDALRQGMPVTVQFGDEAGHE</sequence>
<accession>B7NNM5</accession>
<organism>
    <name type="scientific">Escherichia coli O7:K1 (strain IAI39 / ExPEC)</name>
    <dbReference type="NCBI Taxonomy" id="585057"/>
    <lineage>
        <taxon>Bacteria</taxon>
        <taxon>Pseudomonadati</taxon>
        <taxon>Pseudomonadota</taxon>
        <taxon>Gammaproteobacteria</taxon>
        <taxon>Enterobacterales</taxon>
        <taxon>Enterobacteriaceae</taxon>
        <taxon>Escherichia</taxon>
    </lineage>
</organism>
<evidence type="ECO:0000255" key="1">
    <source>
        <dbReference type="HAMAP-Rule" id="MF_01304"/>
    </source>
</evidence>
<dbReference type="EMBL" id="CU928164">
    <property type="protein sequence ID" value="CAR16908.1"/>
    <property type="molecule type" value="Genomic_DNA"/>
</dbReference>
<dbReference type="RefSeq" id="YP_002406796.1">
    <property type="nucleotide sequence ID" value="NC_011750.1"/>
</dbReference>
<dbReference type="SMR" id="B7NNM5"/>
<dbReference type="STRING" id="585057.ECIAI39_0771"/>
<dbReference type="KEGG" id="ect:ECIAI39_0771"/>
<dbReference type="PATRIC" id="fig|585057.6.peg.815"/>
<dbReference type="HOGENOM" id="CLU_018816_6_3_6"/>
<dbReference type="Proteomes" id="UP000000749">
    <property type="component" value="Chromosome"/>
</dbReference>
<dbReference type="GO" id="GO:0042597">
    <property type="term" value="C:periplasmic space"/>
    <property type="evidence" value="ECO:0007669"/>
    <property type="project" value="UniProtKB-SubCell"/>
</dbReference>
<dbReference type="FunFam" id="1.10.287.470:FF:000004">
    <property type="entry name" value="UPF0194 membrane protein YbhG"/>
    <property type="match status" value="1"/>
</dbReference>
<dbReference type="FunFam" id="2.40.30.170:FF:000005">
    <property type="entry name" value="UPF0194 membrane protein YbhG"/>
    <property type="match status" value="1"/>
</dbReference>
<dbReference type="FunFam" id="2.40.50.100:FF:000025">
    <property type="entry name" value="UPF0194 membrane protein YbhG"/>
    <property type="match status" value="1"/>
</dbReference>
<dbReference type="Gene3D" id="2.40.30.170">
    <property type="match status" value="1"/>
</dbReference>
<dbReference type="Gene3D" id="2.40.50.100">
    <property type="match status" value="2"/>
</dbReference>
<dbReference type="Gene3D" id="1.10.287.470">
    <property type="entry name" value="Helix hairpin bin"/>
    <property type="match status" value="1"/>
</dbReference>
<dbReference type="HAMAP" id="MF_01304">
    <property type="entry name" value="UPF0194"/>
    <property type="match status" value="1"/>
</dbReference>
<dbReference type="InterPro" id="IPR032317">
    <property type="entry name" value="CusB_D23"/>
</dbReference>
<dbReference type="InterPro" id="IPR022936">
    <property type="entry name" value="UPF0194_membrane_YbhG"/>
</dbReference>
<dbReference type="InterPro" id="IPR050465">
    <property type="entry name" value="UPF0194_transport"/>
</dbReference>
<dbReference type="NCBIfam" id="NF002939">
    <property type="entry name" value="PRK03598.1"/>
    <property type="match status" value="1"/>
</dbReference>
<dbReference type="PANTHER" id="PTHR32347">
    <property type="entry name" value="EFFLUX SYSTEM COMPONENT YKNX-RELATED"/>
    <property type="match status" value="1"/>
</dbReference>
<dbReference type="PANTHER" id="PTHR32347:SF29">
    <property type="entry name" value="UPF0194 MEMBRANE PROTEIN YBHG"/>
    <property type="match status" value="1"/>
</dbReference>
<dbReference type="Pfam" id="PF16576">
    <property type="entry name" value="HlyD_D23"/>
    <property type="match status" value="1"/>
</dbReference>
<dbReference type="SUPFAM" id="SSF111369">
    <property type="entry name" value="HlyD-like secretion proteins"/>
    <property type="match status" value="2"/>
</dbReference>
<dbReference type="SUPFAM" id="SSF56954">
    <property type="entry name" value="Outer membrane efflux proteins (OEP)"/>
    <property type="match status" value="1"/>
</dbReference>
<feature type="signal peptide" evidence="1">
    <location>
        <begin position="1"/>
        <end position="16"/>
    </location>
</feature>
<feature type="chain" id="PRO_1000140650" description="UPF0194 membrane protein YbhG">
    <location>
        <begin position="17"/>
        <end position="332"/>
    </location>
</feature>
<feature type="coiled-coil region" evidence="1">
    <location>
        <begin position="108"/>
        <end position="209"/>
    </location>
</feature>
<proteinExistence type="inferred from homology"/>
<comment type="subcellular location">
    <subcellularLocation>
        <location evidence="1">Periplasm</location>
    </subcellularLocation>
</comment>
<comment type="similarity">
    <text evidence="1">Belongs to the UPF0194 family.</text>
</comment>
<keyword id="KW-0175">Coiled coil</keyword>
<keyword id="KW-0574">Periplasm</keyword>
<keyword id="KW-0732">Signal</keyword>
<reference key="1">
    <citation type="journal article" date="2009" name="PLoS Genet.">
        <title>Organised genome dynamics in the Escherichia coli species results in highly diverse adaptive paths.</title>
        <authorList>
            <person name="Touchon M."/>
            <person name="Hoede C."/>
            <person name="Tenaillon O."/>
            <person name="Barbe V."/>
            <person name="Baeriswyl S."/>
            <person name="Bidet P."/>
            <person name="Bingen E."/>
            <person name="Bonacorsi S."/>
            <person name="Bouchier C."/>
            <person name="Bouvet O."/>
            <person name="Calteau A."/>
            <person name="Chiapello H."/>
            <person name="Clermont O."/>
            <person name="Cruveiller S."/>
            <person name="Danchin A."/>
            <person name="Diard M."/>
            <person name="Dossat C."/>
            <person name="Karoui M.E."/>
            <person name="Frapy E."/>
            <person name="Garry L."/>
            <person name="Ghigo J.M."/>
            <person name="Gilles A.M."/>
            <person name="Johnson J."/>
            <person name="Le Bouguenec C."/>
            <person name="Lescat M."/>
            <person name="Mangenot S."/>
            <person name="Martinez-Jehanne V."/>
            <person name="Matic I."/>
            <person name="Nassif X."/>
            <person name="Oztas S."/>
            <person name="Petit M.A."/>
            <person name="Pichon C."/>
            <person name="Rouy Z."/>
            <person name="Ruf C.S."/>
            <person name="Schneider D."/>
            <person name="Tourret J."/>
            <person name="Vacherie B."/>
            <person name="Vallenet D."/>
            <person name="Medigue C."/>
            <person name="Rocha E.P.C."/>
            <person name="Denamur E."/>
        </authorList>
    </citation>
    <scope>NUCLEOTIDE SEQUENCE [LARGE SCALE GENOMIC DNA]</scope>
    <source>
        <strain>IAI39 / ExPEC</strain>
    </source>
</reference>
<protein>
    <recommendedName>
        <fullName evidence="1">UPF0194 membrane protein YbhG</fullName>
    </recommendedName>
</protein>